<organism>
    <name type="scientific">Human papillomavirus type 18</name>
    <dbReference type="NCBI Taxonomy" id="333761"/>
    <lineage>
        <taxon>Viruses</taxon>
        <taxon>Monodnaviria</taxon>
        <taxon>Shotokuvirae</taxon>
        <taxon>Cossaviricota</taxon>
        <taxon>Papovaviricetes</taxon>
        <taxon>Zurhausenvirales</taxon>
        <taxon>Papillomaviridae</taxon>
        <taxon>Firstpapillomavirinae</taxon>
        <taxon>Alphapapillomavirus</taxon>
        <taxon>Alphapapillomavirus 7</taxon>
    </lineage>
</organism>
<keyword id="KW-1048">Host nucleus</keyword>
<keyword id="KW-1185">Reference proteome</keyword>
<organismHost>
    <name type="scientific">Homo sapiens</name>
    <name type="common">Human</name>
    <dbReference type="NCBI Taxonomy" id="9606"/>
</organismHost>
<sequence>MAVLKWKQHRFSTSDDTVSATQLVKQLQHTPSPYSSTVSVGTAKTYGQTSAATRPGHCGLAEKQHCGPVNPLLGAATPTGNNKRRKLCSGNTTPIIHLKGDRNSLKCLRYRLRKHSDHYRDISSTWHWTGAGNEKTGILTVTYHSETQRTKFLNTVAIPDSVQILVGYMTM</sequence>
<dbReference type="EMBL" id="X05015">
    <property type="status" value="NOT_ANNOTATED_CDS"/>
    <property type="molecule type" value="Genomic_DNA"/>
</dbReference>
<dbReference type="SMR" id="P0DKA6"/>
<dbReference type="Proteomes" id="UP000009109">
    <property type="component" value="Genome"/>
</dbReference>
<dbReference type="GO" id="GO:0042025">
    <property type="term" value="C:host cell nucleus"/>
    <property type="evidence" value="ECO:0007669"/>
    <property type="project" value="UniProtKB-SubCell"/>
</dbReference>
<dbReference type="GO" id="GO:0003677">
    <property type="term" value="F:DNA binding"/>
    <property type="evidence" value="ECO:0007669"/>
    <property type="project" value="InterPro"/>
</dbReference>
<dbReference type="GO" id="GO:0003700">
    <property type="term" value="F:DNA-binding transcription factor activity"/>
    <property type="evidence" value="ECO:0007669"/>
    <property type="project" value="InterPro"/>
</dbReference>
<dbReference type="GO" id="GO:0006275">
    <property type="term" value="P:regulation of DNA replication"/>
    <property type="evidence" value="ECO:0007669"/>
    <property type="project" value="InterPro"/>
</dbReference>
<dbReference type="Gene3D" id="3.30.70.330">
    <property type="match status" value="1"/>
</dbReference>
<dbReference type="InterPro" id="IPR035975">
    <property type="entry name" value="E2/EBNA1_C_sf"/>
</dbReference>
<dbReference type="InterPro" id="IPR012677">
    <property type="entry name" value="Nucleotide-bd_a/b_plait_sf"/>
</dbReference>
<dbReference type="InterPro" id="IPR000427">
    <property type="entry name" value="Papillomavirus_E2_C"/>
</dbReference>
<dbReference type="Pfam" id="PF00511">
    <property type="entry name" value="PPV_E2_C"/>
    <property type="match status" value="1"/>
</dbReference>
<dbReference type="SUPFAM" id="SSF54957">
    <property type="entry name" value="Viral DNA-binding domain"/>
    <property type="match status" value="1"/>
</dbReference>
<comment type="function">
    <text evidence="1">Plays a role in limiting the replication of viral DNA in keratinocytes. Recruits the host NCoR/SMRT complex to viral replication foci to mediate repression of both viral replication and transcription.</text>
</comment>
<comment type="subcellular location">
    <subcellularLocation>
        <location evidence="1">Host nucleus</location>
    </subcellularLocation>
</comment>
<comment type="similarity">
    <text evidence="2">Belongs to the papillomaviridae E8^E2C protein family.</text>
</comment>
<name>VE8E2_HPV18</name>
<proteinExistence type="inferred from homology"/>
<accession>P0DKA6</accession>
<protein>
    <recommendedName>
        <fullName>Protein E8^E2C</fullName>
    </recommendedName>
</protein>
<reference key="1">
    <citation type="journal article" date="1987" name="J. Mol. Biol.">
        <title>Nucleotide sequence and comparative analysis of the human papillomavirus type 18 genome. Phylogeny of papillomaviruses and repeated structure of the E6 and E7 gene products.</title>
        <authorList>
            <person name="Cole S.T."/>
            <person name="Danos O."/>
        </authorList>
    </citation>
    <scope>NUCLEOTIDE SEQUENCE [GENOMIC DNA]</scope>
</reference>
<evidence type="ECO:0000250" key="1">
    <source>
        <dbReference type="UniProtKB" id="P0DKA0"/>
    </source>
</evidence>
<evidence type="ECO:0000305" key="2"/>
<feature type="chain" id="PRO_0000438746" description="Protein E8^E2C">
    <location>
        <begin position="1"/>
        <end position="171"/>
    </location>
</feature>